<sequence length="312" mass="33608">MLQYQIDRVDYQIADDQSQSGVFVIGPLDRGQATTLGTALRRVLMSGLEGTAVTAVRIAGVNHEYATVPGVREDVLDILLNCKELVLSSRSRDTEIGRLVVNGPASVTAGDLQFSSQVSVVNADCPIATVADGHALELEVHVERGVGYRPVERTSEDAAALDLLQIDAVFMPVRRVNFTVDETAVGEGGSARERLRLEINTNGSITPDDALAYAANQLIALFQPLATVTLAEEPGQEPEPSAESQIPLEELNLSVRAYNCLKRAQVNSVSDLMGFSYEDLLEIKNFGAKSADEVIEALERIGISLPQSRTTA</sequence>
<proteinExistence type="inferred from homology"/>
<evidence type="ECO:0000255" key="1">
    <source>
        <dbReference type="HAMAP-Rule" id="MF_00059"/>
    </source>
</evidence>
<gene>
    <name evidence="1" type="primary">rpoA</name>
    <name type="ordered locus">SynRCC307_2139</name>
</gene>
<reference key="1">
    <citation type="submission" date="2006-05" db="EMBL/GenBank/DDBJ databases">
        <authorList>
            <consortium name="Genoscope"/>
        </authorList>
    </citation>
    <scope>NUCLEOTIDE SEQUENCE [LARGE SCALE GENOMIC DNA]</scope>
    <source>
        <strain>RCC307</strain>
    </source>
</reference>
<name>RPOA_SYNR3</name>
<accession>A5GVY3</accession>
<comment type="function">
    <text evidence="1">DNA-dependent RNA polymerase catalyzes the transcription of DNA into RNA using the four ribonucleoside triphosphates as substrates.</text>
</comment>
<comment type="catalytic activity">
    <reaction evidence="1">
        <text>RNA(n) + a ribonucleoside 5'-triphosphate = RNA(n+1) + diphosphate</text>
        <dbReference type="Rhea" id="RHEA:21248"/>
        <dbReference type="Rhea" id="RHEA-COMP:14527"/>
        <dbReference type="Rhea" id="RHEA-COMP:17342"/>
        <dbReference type="ChEBI" id="CHEBI:33019"/>
        <dbReference type="ChEBI" id="CHEBI:61557"/>
        <dbReference type="ChEBI" id="CHEBI:140395"/>
        <dbReference type="EC" id="2.7.7.6"/>
    </reaction>
</comment>
<comment type="subunit">
    <text evidence="1">In cyanobacteria the RNAP catalytic core is composed of 2 alpha, 1 beta, 1 beta', 1 gamma and 1 omega subunit. When a sigma factor is associated with the core the holoenzyme is formed, which can initiate transcription.</text>
</comment>
<comment type="domain">
    <text evidence="1">The N-terminal domain is essential for RNAP assembly and basal transcription, whereas the C-terminal domain is involved in interaction with transcriptional regulators and with upstream promoter elements.</text>
</comment>
<comment type="similarity">
    <text evidence="1">Belongs to the RNA polymerase alpha chain family.</text>
</comment>
<protein>
    <recommendedName>
        <fullName evidence="1">DNA-directed RNA polymerase subunit alpha</fullName>
        <shortName evidence="1">RNAP subunit alpha</shortName>
        <ecNumber evidence="1">2.7.7.6</ecNumber>
    </recommendedName>
    <alternativeName>
        <fullName evidence="1">RNA polymerase subunit alpha</fullName>
    </alternativeName>
    <alternativeName>
        <fullName evidence="1">Transcriptase subunit alpha</fullName>
    </alternativeName>
</protein>
<keyword id="KW-0240">DNA-directed RNA polymerase</keyword>
<keyword id="KW-0548">Nucleotidyltransferase</keyword>
<keyword id="KW-1185">Reference proteome</keyword>
<keyword id="KW-0804">Transcription</keyword>
<keyword id="KW-0808">Transferase</keyword>
<dbReference type="EC" id="2.7.7.6" evidence="1"/>
<dbReference type="EMBL" id="CT978603">
    <property type="protein sequence ID" value="CAK29042.1"/>
    <property type="molecule type" value="Genomic_DNA"/>
</dbReference>
<dbReference type="SMR" id="A5GVY3"/>
<dbReference type="STRING" id="316278.SynRCC307_2139"/>
<dbReference type="KEGG" id="syr:SynRCC307_2139"/>
<dbReference type="eggNOG" id="COG0202">
    <property type="taxonomic scope" value="Bacteria"/>
</dbReference>
<dbReference type="HOGENOM" id="CLU_053084_0_1_3"/>
<dbReference type="OrthoDB" id="9805706at2"/>
<dbReference type="Proteomes" id="UP000001115">
    <property type="component" value="Chromosome"/>
</dbReference>
<dbReference type="GO" id="GO:0005737">
    <property type="term" value="C:cytoplasm"/>
    <property type="evidence" value="ECO:0007669"/>
    <property type="project" value="UniProtKB-ARBA"/>
</dbReference>
<dbReference type="GO" id="GO:0000428">
    <property type="term" value="C:DNA-directed RNA polymerase complex"/>
    <property type="evidence" value="ECO:0007669"/>
    <property type="project" value="UniProtKB-KW"/>
</dbReference>
<dbReference type="GO" id="GO:0003677">
    <property type="term" value="F:DNA binding"/>
    <property type="evidence" value="ECO:0007669"/>
    <property type="project" value="UniProtKB-UniRule"/>
</dbReference>
<dbReference type="GO" id="GO:0003899">
    <property type="term" value="F:DNA-directed RNA polymerase activity"/>
    <property type="evidence" value="ECO:0007669"/>
    <property type="project" value="UniProtKB-UniRule"/>
</dbReference>
<dbReference type="GO" id="GO:0046983">
    <property type="term" value="F:protein dimerization activity"/>
    <property type="evidence" value="ECO:0007669"/>
    <property type="project" value="InterPro"/>
</dbReference>
<dbReference type="GO" id="GO:0006351">
    <property type="term" value="P:DNA-templated transcription"/>
    <property type="evidence" value="ECO:0007669"/>
    <property type="project" value="UniProtKB-UniRule"/>
</dbReference>
<dbReference type="CDD" id="cd06928">
    <property type="entry name" value="RNAP_alpha_NTD"/>
    <property type="match status" value="1"/>
</dbReference>
<dbReference type="FunFam" id="2.170.120.12:FF:000001">
    <property type="entry name" value="DNA-directed RNA polymerase subunit alpha"/>
    <property type="match status" value="1"/>
</dbReference>
<dbReference type="Gene3D" id="1.10.150.20">
    <property type="entry name" value="5' to 3' exonuclease, C-terminal subdomain"/>
    <property type="match status" value="1"/>
</dbReference>
<dbReference type="Gene3D" id="2.170.120.12">
    <property type="entry name" value="DNA-directed RNA polymerase, insert domain"/>
    <property type="match status" value="1"/>
</dbReference>
<dbReference type="Gene3D" id="3.30.1360.10">
    <property type="entry name" value="RNA polymerase, RBP11-like subunit"/>
    <property type="match status" value="1"/>
</dbReference>
<dbReference type="HAMAP" id="MF_00059">
    <property type="entry name" value="RNApol_bact_RpoA"/>
    <property type="match status" value="1"/>
</dbReference>
<dbReference type="InterPro" id="IPR011262">
    <property type="entry name" value="DNA-dir_RNA_pol_insert"/>
</dbReference>
<dbReference type="InterPro" id="IPR011263">
    <property type="entry name" value="DNA-dir_RNA_pol_RpoA/D/Rpb3"/>
</dbReference>
<dbReference type="InterPro" id="IPR011773">
    <property type="entry name" value="DNA-dir_RpoA"/>
</dbReference>
<dbReference type="InterPro" id="IPR036603">
    <property type="entry name" value="RBP11-like"/>
</dbReference>
<dbReference type="InterPro" id="IPR011260">
    <property type="entry name" value="RNAP_asu_C"/>
</dbReference>
<dbReference type="InterPro" id="IPR036643">
    <property type="entry name" value="RNApol_insert_sf"/>
</dbReference>
<dbReference type="NCBIfam" id="NF003516">
    <property type="entry name" value="PRK05182.2-2"/>
    <property type="match status" value="1"/>
</dbReference>
<dbReference type="NCBIfam" id="NF003519">
    <property type="entry name" value="PRK05182.2-5"/>
    <property type="match status" value="1"/>
</dbReference>
<dbReference type="NCBIfam" id="TIGR02027">
    <property type="entry name" value="rpoA"/>
    <property type="match status" value="1"/>
</dbReference>
<dbReference type="Pfam" id="PF01000">
    <property type="entry name" value="RNA_pol_A_bac"/>
    <property type="match status" value="1"/>
</dbReference>
<dbReference type="Pfam" id="PF03118">
    <property type="entry name" value="RNA_pol_A_CTD"/>
    <property type="match status" value="1"/>
</dbReference>
<dbReference type="Pfam" id="PF01193">
    <property type="entry name" value="RNA_pol_L"/>
    <property type="match status" value="1"/>
</dbReference>
<dbReference type="SMART" id="SM00662">
    <property type="entry name" value="RPOLD"/>
    <property type="match status" value="1"/>
</dbReference>
<dbReference type="SUPFAM" id="SSF47789">
    <property type="entry name" value="C-terminal domain of RNA polymerase alpha subunit"/>
    <property type="match status" value="1"/>
</dbReference>
<dbReference type="SUPFAM" id="SSF56553">
    <property type="entry name" value="Insert subdomain of RNA polymerase alpha subunit"/>
    <property type="match status" value="1"/>
</dbReference>
<dbReference type="SUPFAM" id="SSF55257">
    <property type="entry name" value="RBP11-like subunits of RNA polymerase"/>
    <property type="match status" value="1"/>
</dbReference>
<feature type="chain" id="PRO_0000323659" description="DNA-directed RNA polymerase subunit alpha">
    <location>
        <begin position="1"/>
        <end position="312"/>
    </location>
</feature>
<feature type="region of interest" description="Alpha N-terminal domain (alpha-NTD)" evidence="1">
    <location>
        <begin position="1"/>
        <end position="229"/>
    </location>
</feature>
<feature type="region of interest" description="Alpha C-terminal domain (alpha-CTD)" evidence="1">
    <location>
        <begin position="241"/>
        <end position="312"/>
    </location>
</feature>
<organism>
    <name type="scientific">Synechococcus sp. (strain RCC307)</name>
    <dbReference type="NCBI Taxonomy" id="316278"/>
    <lineage>
        <taxon>Bacteria</taxon>
        <taxon>Bacillati</taxon>
        <taxon>Cyanobacteriota</taxon>
        <taxon>Cyanophyceae</taxon>
        <taxon>Synechococcales</taxon>
        <taxon>Synechococcaceae</taxon>
        <taxon>Synechococcus</taxon>
    </lineage>
</organism>